<organism>
    <name type="scientific">Streptococcus pneumoniae serotype 19F (strain G54)</name>
    <dbReference type="NCBI Taxonomy" id="512566"/>
    <lineage>
        <taxon>Bacteria</taxon>
        <taxon>Bacillati</taxon>
        <taxon>Bacillota</taxon>
        <taxon>Bacilli</taxon>
        <taxon>Lactobacillales</taxon>
        <taxon>Streptococcaceae</taxon>
        <taxon>Streptococcus</taxon>
    </lineage>
</organism>
<gene>
    <name evidence="1" type="primary">pdxS</name>
    <name type="ordered locus">SPG_1394</name>
</gene>
<sequence length="291" mass="31741">MTENRYELNKNLAQMLKGGVIMDVQNPEQARIAEAAGAAAVMALERIPADIRAAGGVSRMSDPKMIKEIQEAVSIPVMAKVRIGHFVEAQILEAIEIDYIDESEVLSPADDRFHVDKKEFQVPFVCGAKDLGEALRRIAEGASMIRTKGEPGTGDIVQAVRHMRMMNQEIRRIQNLREDELYVAAKDLQVPVELVQYVHEHGKLPVVNFAAGGVATPADAALMMQLGAEGVFVGSGIFKSGDPVKRASAIVKAVTNFRNPQILAQISEDLGEAMVGINENEIQILMAERGK</sequence>
<proteinExistence type="inferred from homology"/>
<protein>
    <recommendedName>
        <fullName evidence="1">Pyridoxal 5'-phosphate synthase subunit PdxS</fullName>
        <shortName evidence="1">PLP synthase subunit PdxS</shortName>
        <ecNumber evidence="1">4.3.3.6</ecNumber>
    </recommendedName>
    <alternativeName>
        <fullName evidence="1">Pdx1</fullName>
    </alternativeName>
</protein>
<evidence type="ECO:0000255" key="1">
    <source>
        <dbReference type="HAMAP-Rule" id="MF_01824"/>
    </source>
</evidence>
<comment type="function">
    <text evidence="1">Catalyzes the formation of pyridoxal 5'-phosphate from ribose 5-phosphate (RBP), glyceraldehyde 3-phosphate (G3P) and ammonia. The ammonia is provided by the PdxT subunit. Can also use ribulose 5-phosphate and dihydroxyacetone phosphate as substrates, resulting from enzyme-catalyzed isomerization of RBP and G3P, respectively.</text>
</comment>
<comment type="catalytic activity">
    <reaction evidence="1">
        <text>aldehydo-D-ribose 5-phosphate + D-glyceraldehyde 3-phosphate + L-glutamine = pyridoxal 5'-phosphate + L-glutamate + phosphate + 3 H2O + H(+)</text>
        <dbReference type="Rhea" id="RHEA:31507"/>
        <dbReference type="ChEBI" id="CHEBI:15377"/>
        <dbReference type="ChEBI" id="CHEBI:15378"/>
        <dbReference type="ChEBI" id="CHEBI:29985"/>
        <dbReference type="ChEBI" id="CHEBI:43474"/>
        <dbReference type="ChEBI" id="CHEBI:58273"/>
        <dbReference type="ChEBI" id="CHEBI:58359"/>
        <dbReference type="ChEBI" id="CHEBI:59776"/>
        <dbReference type="ChEBI" id="CHEBI:597326"/>
        <dbReference type="EC" id="4.3.3.6"/>
    </reaction>
</comment>
<comment type="pathway">
    <text evidence="1">Cofactor biosynthesis; pyridoxal 5'-phosphate biosynthesis.</text>
</comment>
<comment type="subunit">
    <text evidence="1">In the presence of PdxT, forms a dodecamer of heterodimers.</text>
</comment>
<comment type="similarity">
    <text evidence="1">Belongs to the PdxS/SNZ family.</text>
</comment>
<dbReference type="EC" id="4.3.3.6" evidence="1"/>
<dbReference type="EMBL" id="CP001015">
    <property type="protein sequence ID" value="ACF54898.1"/>
    <property type="molecule type" value="Genomic_DNA"/>
</dbReference>
<dbReference type="SMR" id="B5E5W1"/>
<dbReference type="KEGG" id="spx:SPG_1394"/>
<dbReference type="HOGENOM" id="CLU_055352_1_0_9"/>
<dbReference type="UniPathway" id="UPA00245"/>
<dbReference type="GO" id="GO:0036381">
    <property type="term" value="F:pyridoxal 5'-phosphate synthase (glutamine hydrolysing) activity"/>
    <property type="evidence" value="ECO:0007669"/>
    <property type="project" value="UniProtKB-UniRule"/>
</dbReference>
<dbReference type="GO" id="GO:0006520">
    <property type="term" value="P:amino acid metabolic process"/>
    <property type="evidence" value="ECO:0007669"/>
    <property type="project" value="TreeGrafter"/>
</dbReference>
<dbReference type="GO" id="GO:0042823">
    <property type="term" value="P:pyridoxal phosphate biosynthetic process"/>
    <property type="evidence" value="ECO:0007669"/>
    <property type="project" value="UniProtKB-UniRule"/>
</dbReference>
<dbReference type="GO" id="GO:0008615">
    <property type="term" value="P:pyridoxine biosynthetic process"/>
    <property type="evidence" value="ECO:0007669"/>
    <property type="project" value="TreeGrafter"/>
</dbReference>
<dbReference type="CDD" id="cd04727">
    <property type="entry name" value="pdxS"/>
    <property type="match status" value="1"/>
</dbReference>
<dbReference type="FunFam" id="3.20.20.70:FF:000001">
    <property type="entry name" value="Pyridoxine biosynthesis protein PDX1"/>
    <property type="match status" value="1"/>
</dbReference>
<dbReference type="Gene3D" id="3.20.20.70">
    <property type="entry name" value="Aldolase class I"/>
    <property type="match status" value="1"/>
</dbReference>
<dbReference type="HAMAP" id="MF_01824">
    <property type="entry name" value="PdxS"/>
    <property type="match status" value="1"/>
</dbReference>
<dbReference type="InterPro" id="IPR013785">
    <property type="entry name" value="Aldolase_TIM"/>
</dbReference>
<dbReference type="InterPro" id="IPR001852">
    <property type="entry name" value="PdxS/SNZ"/>
</dbReference>
<dbReference type="InterPro" id="IPR033755">
    <property type="entry name" value="PdxS/SNZ_N"/>
</dbReference>
<dbReference type="InterPro" id="IPR011060">
    <property type="entry name" value="RibuloseP-bd_barrel"/>
</dbReference>
<dbReference type="NCBIfam" id="NF003215">
    <property type="entry name" value="PRK04180.1"/>
    <property type="match status" value="1"/>
</dbReference>
<dbReference type="NCBIfam" id="TIGR00343">
    <property type="entry name" value="pyridoxal 5'-phosphate synthase lyase subunit PdxS"/>
    <property type="match status" value="1"/>
</dbReference>
<dbReference type="PANTHER" id="PTHR31829">
    <property type="entry name" value="PYRIDOXAL 5'-PHOSPHATE SYNTHASE SUBUNIT SNZ1-RELATED"/>
    <property type="match status" value="1"/>
</dbReference>
<dbReference type="PANTHER" id="PTHR31829:SF0">
    <property type="entry name" value="PYRIDOXAL 5'-PHOSPHATE SYNTHASE SUBUNIT SNZ1-RELATED"/>
    <property type="match status" value="1"/>
</dbReference>
<dbReference type="Pfam" id="PF01680">
    <property type="entry name" value="SOR_SNZ"/>
    <property type="match status" value="1"/>
</dbReference>
<dbReference type="PIRSF" id="PIRSF029271">
    <property type="entry name" value="Pdx1"/>
    <property type="match status" value="1"/>
</dbReference>
<dbReference type="SUPFAM" id="SSF51366">
    <property type="entry name" value="Ribulose-phoshate binding barrel"/>
    <property type="match status" value="1"/>
</dbReference>
<dbReference type="PROSITE" id="PS01235">
    <property type="entry name" value="PDXS_SNZ_1"/>
    <property type="match status" value="1"/>
</dbReference>
<dbReference type="PROSITE" id="PS51129">
    <property type="entry name" value="PDXS_SNZ_2"/>
    <property type="match status" value="1"/>
</dbReference>
<reference key="1">
    <citation type="journal article" date="2001" name="Microb. Drug Resist.">
        <title>Annotated draft genomic sequence from a Streptococcus pneumoniae type 19F clinical isolate.</title>
        <authorList>
            <person name="Dopazo J."/>
            <person name="Mendoza A."/>
            <person name="Herrero J."/>
            <person name="Caldara F."/>
            <person name="Humbert Y."/>
            <person name="Friedli L."/>
            <person name="Guerrier M."/>
            <person name="Grand-Schenk E."/>
            <person name="Gandin C."/>
            <person name="de Francesco M."/>
            <person name="Polissi A."/>
            <person name="Buell G."/>
            <person name="Feger G."/>
            <person name="Garcia E."/>
            <person name="Peitsch M."/>
            <person name="Garcia-Bustos J.F."/>
        </authorList>
    </citation>
    <scope>NUCLEOTIDE SEQUENCE [LARGE SCALE GENOMIC DNA]</scope>
    <source>
        <strain>G54</strain>
    </source>
</reference>
<reference key="2">
    <citation type="submission" date="2008-03" db="EMBL/GenBank/DDBJ databases">
        <title>Pneumococcal beta glucoside metabolism investigated by whole genome comparison.</title>
        <authorList>
            <person name="Mulas L."/>
            <person name="Trappetti C."/>
            <person name="Hakenbeck R."/>
            <person name="Iannelli F."/>
            <person name="Pozzi G."/>
            <person name="Davidsen T.M."/>
            <person name="Tettelin H."/>
            <person name="Oggioni M."/>
        </authorList>
    </citation>
    <scope>NUCLEOTIDE SEQUENCE [LARGE SCALE GENOMIC DNA]</scope>
    <source>
        <strain>G54</strain>
    </source>
</reference>
<accession>B5E5W1</accession>
<keyword id="KW-0456">Lyase</keyword>
<keyword id="KW-0663">Pyridoxal phosphate</keyword>
<keyword id="KW-0704">Schiff base</keyword>
<feature type="chain" id="PRO_1000188240" description="Pyridoxal 5'-phosphate synthase subunit PdxS">
    <location>
        <begin position="1"/>
        <end position="291"/>
    </location>
</feature>
<feature type="active site" description="Schiff-base intermediate with D-ribose 5-phosphate" evidence="1">
    <location>
        <position position="80"/>
    </location>
</feature>
<feature type="binding site" evidence="1">
    <location>
        <position position="23"/>
    </location>
    <ligand>
        <name>D-ribose 5-phosphate</name>
        <dbReference type="ChEBI" id="CHEBI:78346"/>
    </ligand>
</feature>
<feature type="binding site" evidence="1">
    <location>
        <position position="152"/>
    </location>
    <ligand>
        <name>D-ribose 5-phosphate</name>
        <dbReference type="ChEBI" id="CHEBI:78346"/>
    </ligand>
</feature>
<feature type="binding site" evidence="1">
    <location>
        <position position="164"/>
    </location>
    <ligand>
        <name>D-glyceraldehyde 3-phosphate</name>
        <dbReference type="ChEBI" id="CHEBI:59776"/>
    </ligand>
</feature>
<feature type="binding site" evidence="1">
    <location>
        <position position="213"/>
    </location>
    <ligand>
        <name>D-ribose 5-phosphate</name>
        <dbReference type="ChEBI" id="CHEBI:78346"/>
    </ligand>
</feature>
<feature type="binding site" evidence="1">
    <location>
        <begin position="234"/>
        <end position="235"/>
    </location>
    <ligand>
        <name>D-ribose 5-phosphate</name>
        <dbReference type="ChEBI" id="CHEBI:78346"/>
    </ligand>
</feature>
<name>PDXS_STRP4</name>